<dbReference type="EMBL" id="M68859">
    <property type="protein sequence ID" value="AAB02797.1"/>
    <property type="molecule type" value="mRNA"/>
</dbReference>
<dbReference type="EMBL" id="AL645477">
    <property type="status" value="NOT_ANNOTATED_CDS"/>
    <property type="molecule type" value="Genomic_DNA"/>
</dbReference>
<dbReference type="EMBL" id="AL645848">
    <property type="status" value="NOT_ANNOTATED_CDS"/>
    <property type="molecule type" value="Genomic_DNA"/>
</dbReference>
<dbReference type="EMBL" id="AL645857">
    <property type="status" value="NOT_ANNOTATED_CDS"/>
    <property type="molecule type" value="Genomic_DNA"/>
</dbReference>
<dbReference type="EMBL" id="AL672146">
    <property type="status" value="NOT_ANNOTATED_CDS"/>
    <property type="molecule type" value="Genomic_DNA"/>
</dbReference>
<dbReference type="EMBL" id="AL731776">
    <property type="status" value="NOT_ANNOTATED_CDS"/>
    <property type="molecule type" value="Genomic_DNA"/>
</dbReference>
<dbReference type="EMBL" id="AL732449">
    <property type="status" value="NOT_ANNOTATED_CDS"/>
    <property type="molecule type" value="Genomic_DNA"/>
</dbReference>
<dbReference type="EMBL" id="AL806516">
    <property type="status" value="NOT_ANNOTATED_CDS"/>
    <property type="molecule type" value="Genomic_DNA"/>
</dbReference>
<dbReference type="EMBL" id="AL808024">
    <property type="status" value="NOT_ANNOTATED_CDS"/>
    <property type="molecule type" value="Genomic_DNA"/>
</dbReference>
<dbReference type="EMBL" id="AL833800">
    <property type="status" value="NOT_ANNOTATED_CDS"/>
    <property type="molecule type" value="Genomic_DNA"/>
</dbReference>
<dbReference type="EMBL" id="AL844151">
    <property type="status" value="NOT_ANNOTATED_CDS"/>
    <property type="molecule type" value="Genomic_DNA"/>
</dbReference>
<dbReference type="EMBL" id="BX000479">
    <property type="status" value="NOT_ANNOTATED_CDS"/>
    <property type="molecule type" value="Genomic_DNA"/>
</dbReference>
<dbReference type="EMBL" id="BX294443">
    <property type="status" value="NOT_ANNOTATED_CDS"/>
    <property type="molecule type" value="Genomic_DNA"/>
</dbReference>
<dbReference type="EMBL" id="CR352330">
    <property type="status" value="NOT_ANNOTATED_CDS"/>
    <property type="molecule type" value="Genomic_DNA"/>
</dbReference>
<dbReference type="EMBL" id="CR382328">
    <property type="status" value="NOT_ANNOTATED_CDS"/>
    <property type="molecule type" value="Genomic_DNA"/>
</dbReference>
<dbReference type="EMBL" id="X58153">
    <property type="protein sequence ID" value="CAA41157.1"/>
    <property type="molecule type" value="Genomic_DNA"/>
</dbReference>
<dbReference type="EMBL" id="M18025">
    <property type="protein sequence ID" value="AAA37530.1"/>
    <property type="molecule type" value="mRNA"/>
</dbReference>
<dbReference type="EMBL" id="U56724">
    <property type="protein sequence ID" value="AAB01216.1"/>
    <property type="molecule type" value="Genomic_DNA"/>
</dbReference>
<dbReference type="EMBL" id="U15218">
    <property type="protein sequence ID" value="AAA87068.1"/>
    <property type="molecule type" value="mRNA"/>
</dbReference>
<dbReference type="CCDS" id="CCDS41047.1">
    <molecule id="P11531-1"/>
</dbReference>
<dbReference type="PIR" id="S28916">
    <property type="entry name" value="S28916"/>
</dbReference>
<dbReference type="RefSeq" id="NP_031894.1">
    <molecule id="P11531-1"/>
    <property type="nucleotide sequence ID" value="NM_007868.6"/>
</dbReference>
<dbReference type="PDB" id="8YT8">
    <property type="method" value="EM"/>
    <property type="resolution" value="3.50 A"/>
    <property type="chains" value="E=3065-3395"/>
</dbReference>
<dbReference type="PDBsum" id="8YT8"/>
<dbReference type="EMDB" id="EMD-39568"/>
<dbReference type="SMR" id="P11531"/>
<dbReference type="BioGRID" id="199245">
    <property type="interactions" value="49"/>
</dbReference>
<dbReference type="CORUM" id="P11531"/>
<dbReference type="DIP" id="DIP-32899N"/>
<dbReference type="FunCoup" id="P11531">
    <property type="interactions" value="474"/>
</dbReference>
<dbReference type="IntAct" id="P11531">
    <property type="interactions" value="48"/>
</dbReference>
<dbReference type="MINT" id="P11531"/>
<dbReference type="STRING" id="10090.ENSMUSP00000109633"/>
<dbReference type="ChEMBL" id="CHEMBL5169117"/>
<dbReference type="GlyGen" id="P11531">
    <property type="glycosylation" value="5 sites, 3 N-linked glycans (3 sites), 1 O-linked glycan (2 sites)"/>
</dbReference>
<dbReference type="iPTMnet" id="P11531"/>
<dbReference type="PhosphoSitePlus" id="P11531"/>
<dbReference type="SwissPalm" id="P11531"/>
<dbReference type="jPOST" id="P11531"/>
<dbReference type="PaxDb" id="10090-ENSMUSP00000109633"/>
<dbReference type="PeptideAtlas" id="P11531"/>
<dbReference type="ProteomicsDB" id="277346">
    <molecule id="P11531-1"/>
</dbReference>
<dbReference type="Pumba" id="P11531"/>
<dbReference type="Antibodypedia" id="476">
    <property type="antibodies" value="686 antibodies from 38 providers"/>
</dbReference>
<dbReference type="DNASU" id="13405"/>
<dbReference type="Ensembl" id="ENSMUST00000114000.8">
    <molecule id="P11531-1"/>
    <property type="protein sequence ID" value="ENSMUSP00000109633.2"/>
    <property type="gene ID" value="ENSMUSG00000045103.20"/>
</dbReference>
<dbReference type="GeneID" id="13405"/>
<dbReference type="KEGG" id="mmu:13405"/>
<dbReference type="UCSC" id="uc009tri.2">
    <molecule id="P11531-1"/>
    <property type="organism name" value="mouse"/>
</dbReference>
<dbReference type="AGR" id="MGI:94909"/>
<dbReference type="CTD" id="1756"/>
<dbReference type="MGI" id="MGI:94909">
    <property type="gene designation" value="Dmd"/>
</dbReference>
<dbReference type="VEuPathDB" id="HostDB:ENSMUSG00000045103"/>
<dbReference type="eggNOG" id="KOG4286">
    <property type="taxonomic scope" value="Eukaryota"/>
</dbReference>
<dbReference type="GeneTree" id="ENSGT00940000154342"/>
<dbReference type="HOGENOM" id="CLU_000246_1_0_1"/>
<dbReference type="InParanoid" id="P11531"/>
<dbReference type="OMA" id="SACERYT"/>
<dbReference type="OrthoDB" id="10057795at2759"/>
<dbReference type="PhylomeDB" id="P11531"/>
<dbReference type="TreeFam" id="TF320178"/>
<dbReference type="Reactome" id="R-MMU-390522">
    <property type="pathway name" value="Striated Muscle Contraction"/>
</dbReference>
<dbReference type="Reactome" id="R-MMU-9913351">
    <property type="pathway name" value="Formation of the dystrophin-glycoprotein complex (DGC)"/>
</dbReference>
<dbReference type="BioGRID-ORCS" id="13405">
    <property type="hits" value="0 hits in 81 CRISPR screens"/>
</dbReference>
<dbReference type="CD-CODE" id="CE726F99">
    <property type="entry name" value="Postsynaptic density"/>
</dbReference>
<dbReference type="ChiTaRS" id="Dmd">
    <property type="organism name" value="mouse"/>
</dbReference>
<dbReference type="PRO" id="PR:P11531"/>
<dbReference type="Proteomes" id="UP000000589">
    <property type="component" value="Chromosome X"/>
</dbReference>
<dbReference type="RNAct" id="P11531">
    <property type="molecule type" value="protein"/>
</dbReference>
<dbReference type="Bgee" id="ENSMUSG00000045103">
    <property type="expression patterns" value="Expressed in ascending aorta and 278 other cell types or tissues"/>
</dbReference>
<dbReference type="ExpressionAtlas" id="P11531">
    <property type="expression patterns" value="baseline and differential"/>
</dbReference>
<dbReference type="GO" id="GO:0097449">
    <property type="term" value="C:astrocyte projection"/>
    <property type="evidence" value="ECO:0007669"/>
    <property type="project" value="Ensembl"/>
</dbReference>
<dbReference type="GO" id="GO:0030424">
    <property type="term" value="C:axon"/>
    <property type="evidence" value="ECO:0007669"/>
    <property type="project" value="Ensembl"/>
</dbReference>
<dbReference type="GO" id="GO:0030054">
    <property type="term" value="C:cell junction"/>
    <property type="evidence" value="ECO:0000314"/>
    <property type="project" value="MGI"/>
</dbReference>
<dbReference type="GO" id="GO:0030055">
    <property type="term" value="C:cell-substrate junction"/>
    <property type="evidence" value="ECO:0000314"/>
    <property type="project" value="MGI"/>
</dbReference>
<dbReference type="GO" id="GO:0016010">
    <property type="term" value="C:dystrophin-associated glycoprotein complex"/>
    <property type="evidence" value="ECO:0000314"/>
    <property type="project" value="MGI"/>
</dbReference>
<dbReference type="GO" id="GO:0098982">
    <property type="term" value="C:GABA-ergic synapse"/>
    <property type="evidence" value="ECO:0000314"/>
    <property type="project" value="SynGO"/>
</dbReference>
<dbReference type="GO" id="GO:0030027">
    <property type="term" value="C:lamellipodium"/>
    <property type="evidence" value="ECO:0007669"/>
    <property type="project" value="Ensembl"/>
</dbReference>
<dbReference type="GO" id="GO:0099617">
    <property type="term" value="C:matrix side of mitochondrial inner membrane"/>
    <property type="evidence" value="ECO:0007669"/>
    <property type="project" value="Ensembl"/>
</dbReference>
<dbReference type="GO" id="GO:0045121">
    <property type="term" value="C:membrane raft"/>
    <property type="evidence" value="ECO:0000314"/>
    <property type="project" value="MGI"/>
</dbReference>
<dbReference type="GO" id="GO:0005741">
    <property type="term" value="C:mitochondrial outer membrane"/>
    <property type="evidence" value="ECO:0007669"/>
    <property type="project" value="Ensembl"/>
</dbReference>
<dbReference type="GO" id="GO:0005883">
    <property type="term" value="C:neurofilament"/>
    <property type="evidence" value="ECO:0007669"/>
    <property type="project" value="Ensembl"/>
</dbReference>
<dbReference type="GO" id="GO:0044306">
    <property type="term" value="C:neuron projection terminus"/>
    <property type="evidence" value="ECO:0000314"/>
    <property type="project" value="MGI"/>
</dbReference>
<dbReference type="GO" id="GO:0043025">
    <property type="term" value="C:neuronal cell body"/>
    <property type="evidence" value="ECO:0007669"/>
    <property type="project" value="Ensembl"/>
</dbReference>
<dbReference type="GO" id="GO:0005634">
    <property type="term" value="C:nucleus"/>
    <property type="evidence" value="ECO:0007669"/>
    <property type="project" value="Ensembl"/>
</dbReference>
<dbReference type="GO" id="GO:0048471">
    <property type="term" value="C:perinuclear region of cytoplasm"/>
    <property type="evidence" value="ECO:0007669"/>
    <property type="project" value="Ensembl"/>
</dbReference>
<dbReference type="GO" id="GO:0005886">
    <property type="term" value="C:plasma membrane"/>
    <property type="evidence" value="ECO:0000314"/>
    <property type="project" value="MGI"/>
</dbReference>
<dbReference type="GO" id="GO:0098794">
    <property type="term" value="C:postsynapse"/>
    <property type="evidence" value="ECO:0000314"/>
    <property type="project" value="SynGO"/>
</dbReference>
<dbReference type="GO" id="GO:0014069">
    <property type="term" value="C:postsynaptic density"/>
    <property type="evidence" value="ECO:0007669"/>
    <property type="project" value="Ensembl"/>
</dbReference>
<dbReference type="GO" id="GO:0045211">
    <property type="term" value="C:postsynaptic membrane"/>
    <property type="evidence" value="ECO:0007669"/>
    <property type="project" value="UniProtKB-SubCell"/>
</dbReference>
<dbReference type="GO" id="GO:0099572">
    <property type="term" value="C:postsynaptic specialization"/>
    <property type="evidence" value="ECO:0000314"/>
    <property type="project" value="SynGO"/>
</dbReference>
<dbReference type="GO" id="GO:0032991">
    <property type="term" value="C:protein-containing complex"/>
    <property type="evidence" value="ECO:0000266"/>
    <property type="project" value="MGI"/>
</dbReference>
<dbReference type="GO" id="GO:0005840">
    <property type="term" value="C:ribosome"/>
    <property type="evidence" value="ECO:0007669"/>
    <property type="project" value="Ensembl"/>
</dbReference>
<dbReference type="GO" id="GO:0042383">
    <property type="term" value="C:sarcolemma"/>
    <property type="evidence" value="ECO:0000314"/>
    <property type="project" value="MGI"/>
</dbReference>
<dbReference type="GO" id="GO:0030141">
    <property type="term" value="C:secretory granule"/>
    <property type="evidence" value="ECO:0007669"/>
    <property type="project" value="Ensembl"/>
</dbReference>
<dbReference type="GO" id="GO:0045202">
    <property type="term" value="C:synapse"/>
    <property type="evidence" value="ECO:0000314"/>
    <property type="project" value="MGI"/>
</dbReference>
<dbReference type="GO" id="GO:0030672">
    <property type="term" value="C:synaptic vesicle membrane"/>
    <property type="evidence" value="ECO:0007669"/>
    <property type="project" value="Ensembl"/>
</dbReference>
<dbReference type="GO" id="GO:0030018">
    <property type="term" value="C:Z disc"/>
    <property type="evidence" value="ECO:0000314"/>
    <property type="project" value="MGI"/>
</dbReference>
<dbReference type="GO" id="GO:0003779">
    <property type="term" value="F:actin binding"/>
    <property type="evidence" value="ECO:0007669"/>
    <property type="project" value="UniProtKB-KW"/>
</dbReference>
<dbReference type="GO" id="GO:0005178">
    <property type="term" value="F:integrin binding"/>
    <property type="evidence" value="ECO:0007669"/>
    <property type="project" value="Ensembl"/>
</dbReference>
<dbReference type="GO" id="GO:0005521">
    <property type="term" value="F:lamin binding"/>
    <property type="evidence" value="ECO:0007669"/>
    <property type="project" value="Ensembl"/>
</dbReference>
<dbReference type="GO" id="GO:0050998">
    <property type="term" value="F:nitric-oxide synthase binding"/>
    <property type="evidence" value="ECO:0000353"/>
    <property type="project" value="BHF-UCL"/>
</dbReference>
<dbReference type="GO" id="GO:0030165">
    <property type="term" value="F:PDZ domain binding"/>
    <property type="evidence" value="ECO:0007669"/>
    <property type="project" value="Ensembl"/>
</dbReference>
<dbReference type="GO" id="GO:0008270">
    <property type="term" value="F:zinc ion binding"/>
    <property type="evidence" value="ECO:0007669"/>
    <property type="project" value="UniProtKB-KW"/>
</dbReference>
<dbReference type="GO" id="GO:0006915">
    <property type="term" value="P:apoptotic process"/>
    <property type="evidence" value="ECO:0000315"/>
    <property type="project" value="MGI"/>
</dbReference>
<dbReference type="GO" id="GO:0060348">
    <property type="term" value="P:bone development"/>
    <property type="evidence" value="ECO:0000316"/>
    <property type="project" value="MGI"/>
</dbReference>
<dbReference type="GO" id="GO:0086001">
    <property type="term" value="P:cardiac muscle cell action potential"/>
    <property type="evidence" value="ECO:0000315"/>
    <property type="project" value="BHF-UCL"/>
</dbReference>
<dbReference type="GO" id="GO:0021987">
    <property type="term" value="P:cerebral cortex development"/>
    <property type="evidence" value="ECO:0007669"/>
    <property type="project" value="Ensembl"/>
</dbReference>
<dbReference type="GO" id="GO:0061448">
    <property type="term" value="P:connective tissue development"/>
    <property type="evidence" value="ECO:0000316"/>
    <property type="project" value="MGI"/>
</dbReference>
<dbReference type="GO" id="GO:0008340">
    <property type="term" value="P:determination of adult lifespan"/>
    <property type="evidence" value="ECO:0000316"/>
    <property type="project" value="MGI"/>
</dbReference>
<dbReference type="GO" id="GO:0008065">
    <property type="term" value="P:establishment of blood-nerve barrier"/>
    <property type="evidence" value="ECO:0000315"/>
    <property type="project" value="MGI"/>
</dbReference>
<dbReference type="GO" id="GO:0060857">
    <property type="term" value="P:establishment of glial blood-brain barrier"/>
    <property type="evidence" value="ECO:0000315"/>
    <property type="project" value="MGI"/>
</dbReference>
<dbReference type="GO" id="GO:0010467">
    <property type="term" value="P:gene expression"/>
    <property type="evidence" value="ECO:0000315"/>
    <property type="project" value="MGI"/>
</dbReference>
<dbReference type="GO" id="GO:0006954">
    <property type="term" value="P:inflammatory response"/>
    <property type="evidence" value="ECO:0000315"/>
    <property type="project" value="MGI"/>
</dbReference>
<dbReference type="GO" id="GO:0060173">
    <property type="term" value="P:limb development"/>
    <property type="evidence" value="ECO:0000316"/>
    <property type="project" value="MGI"/>
</dbReference>
<dbReference type="GO" id="GO:0035264">
    <property type="term" value="P:multicellular organism growth"/>
    <property type="evidence" value="ECO:0000316"/>
    <property type="project" value="MGI"/>
</dbReference>
<dbReference type="GO" id="GO:0046716">
    <property type="term" value="P:muscle cell cellular homeostasis"/>
    <property type="evidence" value="ECO:0000315"/>
    <property type="project" value="MGI"/>
</dbReference>
<dbReference type="GO" id="GO:0055001">
    <property type="term" value="P:muscle cell development"/>
    <property type="evidence" value="ECO:0000315"/>
    <property type="project" value="MGI"/>
</dbReference>
<dbReference type="GO" id="GO:0007517">
    <property type="term" value="P:muscle organ development"/>
    <property type="evidence" value="ECO:0000315"/>
    <property type="project" value="MGI"/>
</dbReference>
<dbReference type="GO" id="GO:0014904">
    <property type="term" value="P:myotube cell development"/>
    <property type="evidence" value="ECO:0000315"/>
    <property type="project" value="MGI"/>
</dbReference>
<dbReference type="GO" id="GO:0070373">
    <property type="term" value="P:negative regulation of ERK1 and ERK2 cascade"/>
    <property type="evidence" value="ECO:0000315"/>
    <property type="project" value="MGI"/>
</dbReference>
<dbReference type="GO" id="GO:0045665">
    <property type="term" value="P:negative regulation of neuron differentiation"/>
    <property type="evidence" value="ECO:0007669"/>
    <property type="project" value="Ensembl"/>
</dbReference>
<dbReference type="GO" id="GO:0048812">
    <property type="term" value="P:neuron projection morphogenesis"/>
    <property type="evidence" value="ECO:0007669"/>
    <property type="project" value="Ensembl"/>
</dbReference>
<dbReference type="GO" id="GO:0051647">
    <property type="term" value="P:nucleus localization"/>
    <property type="evidence" value="ECO:0000315"/>
    <property type="project" value="MGI"/>
</dbReference>
<dbReference type="GO" id="GO:0021629">
    <property type="term" value="P:olfactory nerve structural organization"/>
    <property type="evidence" value="ECO:0000315"/>
    <property type="project" value="MGI"/>
</dbReference>
<dbReference type="GO" id="GO:0008284">
    <property type="term" value="P:positive regulation of cell population proliferation"/>
    <property type="evidence" value="ECO:0007669"/>
    <property type="project" value="Ensembl"/>
</dbReference>
<dbReference type="GO" id="GO:0001954">
    <property type="term" value="P:positive regulation of cell-matrix adhesion"/>
    <property type="evidence" value="ECO:0000315"/>
    <property type="project" value="BHF-UCL"/>
</dbReference>
<dbReference type="GO" id="GO:0045666">
    <property type="term" value="P:positive regulation of neuron differentiation"/>
    <property type="evidence" value="ECO:0007669"/>
    <property type="project" value="Ensembl"/>
</dbReference>
<dbReference type="GO" id="GO:0010976">
    <property type="term" value="P:positive regulation of neuron projection development"/>
    <property type="evidence" value="ECO:0007669"/>
    <property type="project" value="Ensembl"/>
</dbReference>
<dbReference type="GO" id="GO:0008104">
    <property type="term" value="P:protein localization"/>
    <property type="evidence" value="ECO:0000315"/>
    <property type="project" value="BHF-UCL"/>
</dbReference>
<dbReference type="GO" id="GO:0065003">
    <property type="term" value="P:protein-containing complex assembly"/>
    <property type="evidence" value="ECO:0000315"/>
    <property type="project" value="BHF-UCL"/>
</dbReference>
<dbReference type="GO" id="GO:1903409">
    <property type="term" value="P:reactive oxygen species biosynthetic process"/>
    <property type="evidence" value="ECO:0000315"/>
    <property type="project" value="MGI"/>
</dbReference>
<dbReference type="GO" id="GO:1903169">
    <property type="term" value="P:regulation of calcium ion transmembrane transport"/>
    <property type="evidence" value="ECO:0000315"/>
    <property type="project" value="BHF-UCL"/>
</dbReference>
<dbReference type="GO" id="GO:0010881">
    <property type="term" value="P:regulation of cardiac muscle contraction by regulation of the release of sequestered calcium ion"/>
    <property type="evidence" value="ECO:0000315"/>
    <property type="project" value="BHF-UCL"/>
</dbReference>
<dbReference type="GO" id="GO:0090287">
    <property type="term" value="P:regulation of cellular response to growth factor stimulus"/>
    <property type="evidence" value="ECO:0007669"/>
    <property type="project" value="Ensembl"/>
</dbReference>
<dbReference type="GO" id="GO:0006355">
    <property type="term" value="P:regulation of DNA-templated transcription"/>
    <property type="evidence" value="ECO:0000315"/>
    <property type="project" value="MGI"/>
</dbReference>
<dbReference type="GO" id="GO:0010468">
    <property type="term" value="P:regulation of gene expression"/>
    <property type="evidence" value="ECO:0000315"/>
    <property type="project" value="MGI"/>
</dbReference>
<dbReference type="GO" id="GO:0002027">
    <property type="term" value="P:regulation of heart rate"/>
    <property type="evidence" value="ECO:0000315"/>
    <property type="project" value="BHF-UCL"/>
</dbReference>
<dbReference type="GO" id="GO:0042391">
    <property type="term" value="P:regulation of membrane potential"/>
    <property type="evidence" value="ECO:0000315"/>
    <property type="project" value="MGI"/>
</dbReference>
<dbReference type="GO" id="GO:0010880">
    <property type="term" value="P:regulation of release of sequestered calcium ion into cytosol by sarcoplasmic reticulum"/>
    <property type="evidence" value="ECO:0000315"/>
    <property type="project" value="BHF-UCL"/>
</dbReference>
<dbReference type="GO" id="GO:0014819">
    <property type="term" value="P:regulation of skeletal muscle contraction"/>
    <property type="evidence" value="ECO:0000315"/>
    <property type="project" value="BHF-UCL"/>
</dbReference>
<dbReference type="GO" id="GO:0014809">
    <property type="term" value="P:regulation of skeletal muscle contraction by regulation of release of sequestered calcium ion"/>
    <property type="evidence" value="ECO:0000315"/>
    <property type="project" value="BHF-UCL"/>
</dbReference>
<dbReference type="GO" id="GO:1902305">
    <property type="term" value="P:regulation of sodium ion transmembrane transport"/>
    <property type="evidence" value="ECO:0000315"/>
    <property type="project" value="BHF-UCL"/>
</dbReference>
<dbReference type="GO" id="GO:0014894">
    <property type="term" value="P:response to denervation involved in regulation of muscle adaptation"/>
    <property type="evidence" value="ECO:0007669"/>
    <property type="project" value="Ensembl"/>
</dbReference>
<dbReference type="GO" id="GO:0035994">
    <property type="term" value="P:response to muscle stretch"/>
    <property type="evidence" value="ECO:0000315"/>
    <property type="project" value="MGI"/>
</dbReference>
<dbReference type="GO" id="GO:0009410">
    <property type="term" value="P:response to xenobiotic stimulus"/>
    <property type="evidence" value="ECO:0000315"/>
    <property type="project" value="MGI"/>
</dbReference>
<dbReference type="GO" id="GO:0007519">
    <property type="term" value="P:skeletal muscle tissue development"/>
    <property type="evidence" value="ECO:0000315"/>
    <property type="project" value="MGI"/>
</dbReference>
<dbReference type="GO" id="GO:0043403">
    <property type="term" value="P:skeletal muscle tissue regeneration"/>
    <property type="evidence" value="ECO:0000315"/>
    <property type="project" value="MGI"/>
</dbReference>
<dbReference type="GO" id="GO:0055002">
    <property type="term" value="P:striated muscle cell development"/>
    <property type="evidence" value="ECO:0000316"/>
    <property type="project" value="MGI"/>
</dbReference>
<dbReference type="GO" id="GO:0006941">
    <property type="term" value="P:striated muscle contraction"/>
    <property type="evidence" value="ECO:0000316"/>
    <property type="project" value="MGI"/>
</dbReference>
<dbReference type="GO" id="GO:0007271">
    <property type="term" value="P:synaptic transmission, cholinergic"/>
    <property type="evidence" value="ECO:0000315"/>
    <property type="project" value="MGI"/>
</dbReference>
<dbReference type="GO" id="GO:0090659">
    <property type="term" value="P:walking behavior"/>
    <property type="evidence" value="ECO:0000316"/>
    <property type="project" value="MGI"/>
</dbReference>
<dbReference type="CDD" id="cd21231">
    <property type="entry name" value="CH_DMD_rpt1"/>
    <property type="match status" value="1"/>
</dbReference>
<dbReference type="CDD" id="cd21233">
    <property type="entry name" value="CH_DMD_rpt2"/>
    <property type="match status" value="1"/>
</dbReference>
<dbReference type="CDD" id="cd16246">
    <property type="entry name" value="EFh_DMD"/>
    <property type="match status" value="1"/>
</dbReference>
<dbReference type="CDD" id="cd00176">
    <property type="entry name" value="SPEC"/>
    <property type="match status" value="11"/>
</dbReference>
<dbReference type="CDD" id="cd00201">
    <property type="entry name" value="WW"/>
    <property type="match status" value="1"/>
</dbReference>
<dbReference type="CDD" id="cd02334">
    <property type="entry name" value="ZZ_dystrophin"/>
    <property type="match status" value="1"/>
</dbReference>
<dbReference type="FunFam" id="1.20.58.60:FF:000118">
    <property type="entry name" value="Dystrophin"/>
    <property type="match status" value="1"/>
</dbReference>
<dbReference type="FunFam" id="1.20.58.60:FF:000170">
    <property type="entry name" value="Dystrophin"/>
    <property type="match status" value="1"/>
</dbReference>
<dbReference type="FunFam" id="1.20.58.60:FF:000207">
    <property type="entry name" value="Dystrophin"/>
    <property type="match status" value="1"/>
</dbReference>
<dbReference type="FunFam" id="1.20.58.60:FF:000283">
    <property type="entry name" value="Dystrophin"/>
    <property type="match status" value="1"/>
</dbReference>
<dbReference type="FunFam" id="1.10.238.10:FF:000008">
    <property type="entry name" value="Dystrophin isoform 2"/>
    <property type="match status" value="1"/>
</dbReference>
<dbReference type="FunFam" id="3.30.60.90:FF:000001">
    <property type="entry name" value="Dystrophin isoform 2"/>
    <property type="match status" value="1"/>
</dbReference>
<dbReference type="FunFam" id="1.10.238.10:FF:000023">
    <property type="entry name" value="dystrophin isoform X1"/>
    <property type="match status" value="1"/>
</dbReference>
<dbReference type="FunFam" id="1.20.58.60:FF:000140">
    <property type="entry name" value="dystrophin isoform X1"/>
    <property type="match status" value="1"/>
</dbReference>
<dbReference type="FunFam" id="2.20.70.10:FF:000004">
    <property type="entry name" value="dystrophin isoform X1"/>
    <property type="match status" value="1"/>
</dbReference>
<dbReference type="FunFam" id="1.20.58.60:FF:000091">
    <property type="entry name" value="dystrophin isoform X2"/>
    <property type="match status" value="1"/>
</dbReference>
<dbReference type="FunFam" id="1.20.58.60:FF:000146">
    <property type="entry name" value="dystrophin isoform X2"/>
    <property type="match status" value="1"/>
</dbReference>
<dbReference type="FunFam" id="1.20.58.60:FF:000183">
    <property type="entry name" value="dystrophin isoform X2"/>
    <property type="match status" value="1"/>
</dbReference>
<dbReference type="FunFam" id="1.10.418.10:FF:000032">
    <property type="entry name" value="utrophin isoform X1"/>
    <property type="match status" value="1"/>
</dbReference>
<dbReference type="FunFam" id="1.20.58.60:FF:000029">
    <property type="entry name" value="utrophin isoform X1"/>
    <property type="match status" value="1"/>
</dbReference>
<dbReference type="FunFam" id="1.20.58.60:FF:000056">
    <property type="entry name" value="utrophin isoform X1"/>
    <property type="match status" value="1"/>
</dbReference>
<dbReference type="FunFam" id="1.20.58.60:FF:000070">
    <property type="entry name" value="utrophin isoform X1"/>
    <property type="match status" value="1"/>
</dbReference>
<dbReference type="FunFam" id="1.20.58.60:FF:000075">
    <property type="entry name" value="utrophin isoform X1"/>
    <property type="match status" value="1"/>
</dbReference>
<dbReference type="FunFam" id="1.10.418.10:FF:000044">
    <property type="entry name" value="utrophin isoform X2"/>
    <property type="match status" value="1"/>
</dbReference>
<dbReference type="FunFam" id="1.20.58.60:FF:000102">
    <property type="entry name" value="utrophin isoform X2"/>
    <property type="match status" value="1"/>
</dbReference>
<dbReference type="Gene3D" id="1.20.58.60">
    <property type="match status" value="16"/>
</dbReference>
<dbReference type="Gene3D" id="2.20.70.10">
    <property type="match status" value="1"/>
</dbReference>
<dbReference type="Gene3D" id="3.30.60.90">
    <property type="match status" value="1"/>
</dbReference>
<dbReference type="Gene3D" id="1.10.418.10">
    <property type="entry name" value="Calponin-like domain"/>
    <property type="match status" value="2"/>
</dbReference>
<dbReference type="Gene3D" id="1.10.238.10">
    <property type="entry name" value="EF-hand"/>
    <property type="match status" value="2"/>
</dbReference>
<dbReference type="InterPro" id="IPR001589">
    <property type="entry name" value="Actinin_actin-bd_CS"/>
</dbReference>
<dbReference type="InterPro" id="IPR001715">
    <property type="entry name" value="CH_dom"/>
</dbReference>
<dbReference type="InterPro" id="IPR036872">
    <property type="entry name" value="CH_dom_sf"/>
</dbReference>
<dbReference type="InterPro" id="IPR035436">
    <property type="entry name" value="Dystrophin/utrophin"/>
</dbReference>
<dbReference type="InterPro" id="IPR011992">
    <property type="entry name" value="EF-hand-dom_pair"/>
</dbReference>
<dbReference type="InterPro" id="IPR015153">
    <property type="entry name" value="EF-hand_dom_typ1"/>
</dbReference>
<dbReference type="InterPro" id="IPR015154">
    <property type="entry name" value="EF-hand_dom_typ2"/>
</dbReference>
<dbReference type="InterPro" id="IPR050774">
    <property type="entry name" value="KCMF1/Dystrophin"/>
</dbReference>
<dbReference type="InterPro" id="IPR018159">
    <property type="entry name" value="Spectrin/alpha-actinin"/>
</dbReference>
<dbReference type="InterPro" id="IPR002017">
    <property type="entry name" value="Spectrin_repeat"/>
</dbReference>
<dbReference type="InterPro" id="IPR001202">
    <property type="entry name" value="WW_dom"/>
</dbReference>
<dbReference type="InterPro" id="IPR036020">
    <property type="entry name" value="WW_dom_sf"/>
</dbReference>
<dbReference type="InterPro" id="IPR000433">
    <property type="entry name" value="Znf_ZZ"/>
</dbReference>
<dbReference type="InterPro" id="IPR043145">
    <property type="entry name" value="Znf_ZZ_sf"/>
</dbReference>
<dbReference type="PANTHER" id="PTHR12268:SF14">
    <property type="entry name" value="DYSTROPHIN-1"/>
    <property type="match status" value="1"/>
</dbReference>
<dbReference type="PANTHER" id="PTHR12268">
    <property type="entry name" value="E3 UBIQUITIN-PROTEIN LIGASE KCMF1"/>
    <property type="match status" value="1"/>
</dbReference>
<dbReference type="Pfam" id="PF00307">
    <property type="entry name" value="CH"/>
    <property type="match status" value="2"/>
</dbReference>
<dbReference type="Pfam" id="PF09068">
    <property type="entry name" value="EF-hand_2"/>
    <property type="match status" value="1"/>
</dbReference>
<dbReference type="Pfam" id="PF09069">
    <property type="entry name" value="EF-hand_3"/>
    <property type="match status" value="1"/>
</dbReference>
<dbReference type="Pfam" id="PF00435">
    <property type="entry name" value="Spectrin"/>
    <property type="match status" value="16"/>
</dbReference>
<dbReference type="Pfam" id="PF00397">
    <property type="entry name" value="WW"/>
    <property type="match status" value="1"/>
</dbReference>
<dbReference type="Pfam" id="PF00569">
    <property type="entry name" value="ZZ"/>
    <property type="match status" value="1"/>
</dbReference>
<dbReference type="PIRSF" id="PIRSF002341">
    <property type="entry name" value="Dystrophin/utrophin"/>
    <property type="match status" value="1"/>
</dbReference>
<dbReference type="SMART" id="SM00033">
    <property type="entry name" value="CH"/>
    <property type="match status" value="2"/>
</dbReference>
<dbReference type="SMART" id="SM00150">
    <property type="entry name" value="SPEC"/>
    <property type="match status" value="22"/>
</dbReference>
<dbReference type="SMART" id="SM00456">
    <property type="entry name" value="WW"/>
    <property type="match status" value="1"/>
</dbReference>
<dbReference type="SMART" id="SM00291">
    <property type="entry name" value="ZnF_ZZ"/>
    <property type="match status" value="1"/>
</dbReference>
<dbReference type="SUPFAM" id="SSF47576">
    <property type="entry name" value="Calponin-homology domain, CH-domain"/>
    <property type="match status" value="1"/>
</dbReference>
<dbReference type="SUPFAM" id="SSF47473">
    <property type="entry name" value="EF-hand"/>
    <property type="match status" value="2"/>
</dbReference>
<dbReference type="SUPFAM" id="SSF57850">
    <property type="entry name" value="RING/U-box"/>
    <property type="match status" value="1"/>
</dbReference>
<dbReference type="SUPFAM" id="SSF46966">
    <property type="entry name" value="Spectrin repeat"/>
    <property type="match status" value="15"/>
</dbReference>
<dbReference type="SUPFAM" id="SSF51045">
    <property type="entry name" value="WW domain"/>
    <property type="match status" value="1"/>
</dbReference>
<dbReference type="PROSITE" id="PS00019">
    <property type="entry name" value="ACTININ_1"/>
    <property type="match status" value="1"/>
</dbReference>
<dbReference type="PROSITE" id="PS00020">
    <property type="entry name" value="ACTININ_2"/>
    <property type="match status" value="1"/>
</dbReference>
<dbReference type="PROSITE" id="PS50021">
    <property type="entry name" value="CH"/>
    <property type="match status" value="2"/>
</dbReference>
<dbReference type="PROSITE" id="PS01159">
    <property type="entry name" value="WW_DOMAIN_1"/>
    <property type="match status" value="1"/>
</dbReference>
<dbReference type="PROSITE" id="PS50020">
    <property type="entry name" value="WW_DOMAIN_2"/>
    <property type="match status" value="1"/>
</dbReference>
<dbReference type="PROSITE" id="PS01357">
    <property type="entry name" value="ZF_ZZ_1"/>
    <property type="match status" value="1"/>
</dbReference>
<dbReference type="PROSITE" id="PS50135">
    <property type="entry name" value="ZF_ZZ_2"/>
    <property type="match status" value="1"/>
</dbReference>
<comment type="function">
    <text evidence="17">Anchors the extracellular matrix to the cytoskeleton via F-actin. Ligand for dystroglycan. Component of the dystrophin-associated glycoprotein complex which accumulates at the neuromuscular junction (NMJ) and at a variety of synapses in the peripheral and central nervous systems and has a structural function in stabilizing the sarcolemma. Also implicated in signaling events and synaptic transmission.</text>
</comment>
<comment type="subunit">
    <text evidence="2 7 8 9 10 11 12 15 16 18 19">Interacts with SYNM (PubMed:16777071). Interacts with the syntrophins SNTG1 and SNTG2. Interacts with KRT19. Component of the dystrophin-associated glycoprotein complex which is composed of three subcomplexes: a cytoplasmic complex comprised of DMD (or UTRN), DTNA and a number of syntrophins, such as SNTB1, SNTB2, SNTG1 and SNTG2, the transmembrane dystroglycan complex, and the sarcoglycan-sarcospan complex. Interacts with DAG1 (betaDAG1) with DMD; the interaction is inhibited by phosphorylation on the PPXY motif of DAG1 (By similarity). Interacts with SYNM; SNTA1 and SNTB1. Interacts with CMYA5 (PubMed:20634290). Directly interacts with ANK2 and ANK3; these interactions do not interfere with betaDAG1-binding and are necessary for proper localization in muscle cells (PubMed:19109891). Identified in a dystroglycan complex that contains at least PRX, DRP2, UTRN, DMD and DAG1 (PubMed:11430802). Interacts with DTNB (PubMed:10893187). Interacts with PGM5; the interaction is direct (PubMed:7890770). Interacts with NOS1; localizes NOS1 to sarcolemma in muscle cells (PubMed:7545544).</text>
</comment>
<comment type="interaction">
    <interactant intactId="EBI-295928">
        <id>P11531</id>
    </interactant>
    <interactant intactId="EBI-15949673">
        <id>Q9CZA6-1</id>
        <label>Nde1</label>
    </interactant>
    <organismsDiffer>false</organismsDiffer>
    <experiments>2</experiments>
</comment>
<comment type="interaction">
    <interactant intactId="EBI-295928">
        <id>P11531</id>
    </interactant>
    <interactant intactId="EBI-295952">
        <id>Q61234</id>
        <label>Snta1</label>
    </interactant>
    <organismsDiffer>false</organismsDiffer>
    <experiments>4</experiments>
</comment>
<comment type="subcellular location">
    <subcellularLocation>
        <location evidence="11 14">Cell membrane</location>
        <location evidence="11 14">Sarcolemma</location>
        <topology evidence="11">Peripheral membrane protein</topology>
        <orientation evidence="11">Cytoplasmic side</orientation>
    </subcellularLocation>
    <subcellularLocation>
        <location evidence="11">Cytoplasm</location>
        <location evidence="11">Cytoskeleton</location>
    </subcellularLocation>
    <subcellularLocation>
        <location evidence="11">Postsynaptic cell membrane</location>
    </subcellularLocation>
    <text>In muscle cells, sarcolemma localization requires the presence of ANK2, while localization to costameres requires the presence of ANK3. Localizes to neuromuscular junctions (NMJs). In adult muscle, NMJ localization depends upon ANK2 presence, but not in newborn animals.</text>
</comment>
<comment type="alternative products">
    <event type="alternative splicing"/>
    <isoform>
        <id>P11531-1</id>
        <name>1</name>
        <sequence type="displayed"/>
    </isoform>
    <text>At least 11 isoforms are produced.</text>
</comment>
<comment type="tissue specificity">
    <text evidence="8 14 17">Detected in quadriceps muscle and in sciatic nerve (at protein level) (PubMed:11430802). Expressed in the sarcolemma of the soleus muscle (at protein level) (PubMed:28752107). Differentially expressed during skeletal muscle, heart, and brain development. Also expressed in retina (PubMed:7633443).</text>
</comment>
<comment type="disruption phenotype">
    <text evidence="13">Mutant mice show reduced contractile force compared to wild-types, at least for soleus muscle. They have decreased motor activity levels after exercise, increased muscle permeability and fibrosis with impaired regeneration (PubMed:28498977). MEGF10 and DMD double knockout animals have pronounced fiber size variability and intracellular inclusions in the quadriceps femoris with extensive endomysial connective tissue infiltration. Mice develop muscle weakness, kyphosis and a waddling gait. At 2 months of age, they have reduced contractile force compared to wild-type mice. They display reduced motor activity after exercise and they walk shorter distances than wild-type. They have a delayed regeneration after muscle injury and an aberrant muscle fiber typing and cross-sectional areas (PubMed:28498977).</text>
</comment>
<feature type="chain" id="PRO_0000076076" description="Dystrophin">
    <location>
        <begin position="1"/>
        <end position="3678"/>
    </location>
</feature>
<feature type="domain" description="Calponin-homology (CH) 1" evidence="3">
    <location>
        <begin position="15"/>
        <end position="119"/>
    </location>
</feature>
<feature type="domain" description="Calponin-homology (CH) 2" evidence="3">
    <location>
        <begin position="134"/>
        <end position="240"/>
    </location>
</feature>
<feature type="repeat" description="Spectrin 1">
    <location>
        <begin position="341"/>
        <end position="449"/>
    </location>
</feature>
<feature type="repeat" description="Spectrin 2">
    <location>
        <begin position="450"/>
        <end position="558"/>
    </location>
</feature>
<feature type="repeat" description="Spectrin 3">
    <location>
        <begin position="561"/>
        <end position="669"/>
    </location>
</feature>
<feature type="repeat" description="Spectrin 4">
    <location>
        <begin position="721"/>
        <end position="830"/>
    </location>
</feature>
<feature type="repeat" description="Spectrin 5">
    <location>
        <begin position="832"/>
        <end position="936"/>
    </location>
</feature>
<feature type="repeat" description="Spectrin 6">
    <location>
        <begin position="945"/>
        <end position="1047"/>
    </location>
</feature>
<feature type="repeat" description="Spectrin 7">
    <location>
        <begin position="1050"/>
        <end position="1156"/>
    </location>
</feature>
<feature type="repeat" description="Spectrin 8">
    <location>
        <begin position="1159"/>
        <end position="1265"/>
    </location>
</feature>
<feature type="repeat" description="Spectrin 9">
    <location>
        <begin position="1268"/>
        <end position="1369"/>
    </location>
</feature>
<feature type="repeat" description="Spectrin 10">
    <location>
        <begin position="1370"/>
        <end position="1465"/>
    </location>
</feature>
<feature type="repeat" description="Spectrin 11">
    <location>
        <begin position="1470"/>
        <end position="1570"/>
    </location>
</feature>
<feature type="repeat" description="Spectrin 12">
    <location>
        <begin position="1573"/>
        <end position="1678"/>
    </location>
</feature>
<feature type="repeat" description="Spectrin 13">
    <location>
        <begin position="1681"/>
        <end position="1780"/>
    </location>
</feature>
<feature type="repeat" description="Spectrin 14">
    <location>
        <begin position="1781"/>
        <end position="1876"/>
    </location>
</feature>
<feature type="repeat" description="Spectrin 15">
    <location>
        <begin position="1879"/>
        <end position="1981"/>
    </location>
</feature>
<feature type="repeat" description="Spectrin 16">
    <location>
        <begin position="1994"/>
        <end position="2103"/>
    </location>
</feature>
<feature type="repeat" description="Spectrin 17">
    <location>
        <begin position="2106"/>
        <end position="2210"/>
    </location>
</feature>
<feature type="repeat" description="Spectrin 18">
    <location>
        <begin position="2213"/>
        <end position="2318"/>
    </location>
</feature>
<feature type="repeat" description="Spectrin 19">
    <location>
        <begin position="2319"/>
        <end position="2416"/>
    </location>
</feature>
<feature type="repeat" description="Spectrin 20">
    <location>
        <begin position="2468"/>
        <end position="2570"/>
    </location>
</feature>
<feature type="repeat" description="Spectrin 21">
    <location>
        <begin position="2573"/>
        <end position="2679"/>
    </location>
</feature>
<feature type="repeat" description="Spectrin 22">
    <location>
        <begin position="2682"/>
        <end position="2795"/>
    </location>
</feature>
<feature type="repeat" description="Spectrin 23">
    <location>
        <begin position="2801"/>
        <end position="2923"/>
    </location>
</feature>
<feature type="repeat" description="Spectrin 24">
    <location>
        <begin position="2928"/>
        <end position="3033"/>
    </location>
</feature>
<feature type="domain" description="WW" evidence="4">
    <location>
        <begin position="3048"/>
        <end position="3081"/>
    </location>
</feature>
<feature type="zinc finger region" description="ZZ-type; degenerate" evidence="5">
    <location>
        <begin position="3301"/>
        <end position="3357"/>
    </location>
</feature>
<feature type="region of interest" description="Actin-binding">
    <location>
        <begin position="1"/>
        <end position="240"/>
    </location>
</feature>
<feature type="region of interest" description="ANK2- and ANK-3 binding">
    <location>
        <begin position="63"/>
        <end position="72"/>
    </location>
</feature>
<feature type="region of interest" description="Disordered" evidence="6">
    <location>
        <begin position="313"/>
        <end position="333"/>
    </location>
</feature>
<feature type="region of interest" description="Interaction with SYNM" evidence="10">
    <location>
        <begin position="1417"/>
        <end position="1915"/>
    </location>
</feature>
<feature type="region of interest" description="Interaction with SYNM" evidence="10">
    <location>
        <begin position="3051"/>
        <end position="3401"/>
    </location>
</feature>
<feature type="region of interest" description="Binds to SNTB1" evidence="1">
    <location>
        <begin position="3459"/>
        <end position="3511"/>
    </location>
</feature>
<feature type="region of interest" description="Disordered" evidence="6">
    <location>
        <begin position="3521"/>
        <end position="3547"/>
    </location>
</feature>
<feature type="region of interest" description="Disordered" evidence="6">
    <location>
        <begin position="3596"/>
        <end position="3678"/>
    </location>
</feature>
<feature type="compositionally biased region" description="Polar residues" evidence="6">
    <location>
        <begin position="3600"/>
        <end position="3619"/>
    </location>
</feature>
<feature type="compositionally biased region" description="Polar residues" evidence="6">
    <location>
        <begin position="3655"/>
        <end position="3665"/>
    </location>
</feature>
<feature type="binding site" evidence="5">
    <location>
        <position position="3306"/>
    </location>
    <ligand>
        <name>Zn(2+)</name>
        <dbReference type="ChEBI" id="CHEBI:29105"/>
    </ligand>
</feature>
<feature type="binding site" evidence="5">
    <location>
        <position position="3309"/>
    </location>
    <ligand>
        <name>Zn(2+)</name>
        <dbReference type="ChEBI" id="CHEBI:29105"/>
    </ligand>
</feature>
<feature type="binding site" evidence="5">
    <location>
        <position position="3330"/>
    </location>
    <ligand>
        <name>Zn(2+)</name>
        <dbReference type="ChEBI" id="CHEBI:29105"/>
    </ligand>
</feature>
<feature type="binding site" evidence="5">
    <location>
        <position position="3333"/>
    </location>
    <ligand>
        <name>Zn(2+)</name>
        <dbReference type="ChEBI" id="CHEBI:29105"/>
    </ligand>
</feature>
<feature type="modified residue" description="Phosphoserine" evidence="2">
    <location>
        <position position="3476"/>
    </location>
</feature>
<feature type="modified residue" description="Phosphoserine" evidence="2">
    <location>
        <position position="3483"/>
    </location>
</feature>
<feature type="modified residue" description="Phosphoserine" evidence="2">
    <location>
        <position position="3493"/>
    </location>
</feature>
<feature type="modified residue" description="Phosphoserine" evidence="2">
    <location>
        <position position="3605"/>
    </location>
</feature>
<feature type="modified residue" description="Phosphoserine" evidence="2">
    <location>
        <position position="3606"/>
    </location>
</feature>
<feature type="modified residue" description="Phosphoserine" evidence="22">
    <location>
        <position position="3610"/>
    </location>
</feature>
<feature type="modified residue" description="Phosphoserine" evidence="21 22">
    <location>
        <position position="3616"/>
    </location>
</feature>
<feature type="modified residue" description="Phosphoserine" evidence="21 22">
    <location>
        <position position="3617"/>
    </location>
</feature>
<feature type="modified residue" description="Phosphoserine" evidence="2">
    <location>
        <position position="3659"/>
    </location>
</feature>
<feature type="sequence conflict" description="In Ref. 5; AAA37530." evidence="20" ref="5">
    <original>D</original>
    <variation>H</variation>
    <location>
        <position position="463"/>
    </location>
</feature>
<feature type="sequence conflict" description="In Ref. 5; AAA37530." evidence="20" ref="5">
    <original>S</original>
    <variation>F</variation>
    <location>
        <position position="677"/>
    </location>
</feature>
<reference key="1">
    <citation type="journal article" date="1992" name="Nucleic Acids Res.">
        <title>Human and murine dystrophin mRNA transcripts are differentially expressed during skeletal muscle, heart, and brain development.</title>
        <authorList>
            <person name="Bies R.D."/>
            <person name="Phelps S.F."/>
            <person name="Cortez M.D."/>
            <person name="Roberts R."/>
            <person name="Caskey C.T."/>
            <person name="Chamberlain J.S."/>
        </authorList>
    </citation>
    <scope>NUCLEOTIDE SEQUENCE [MRNA]</scope>
    <source>
        <strain>C57BL/10</strain>
        <tissue>Skeletal muscle</tissue>
    </source>
</reference>
<reference key="2">
    <citation type="journal article" date="2009" name="PLoS Biol.">
        <title>Lineage-specific biology revealed by a finished genome assembly of the mouse.</title>
        <authorList>
            <person name="Church D.M."/>
            <person name="Goodstadt L."/>
            <person name="Hillier L.W."/>
            <person name="Zody M.C."/>
            <person name="Goldstein S."/>
            <person name="She X."/>
            <person name="Bult C.J."/>
            <person name="Agarwala R."/>
            <person name="Cherry J.L."/>
            <person name="DiCuccio M."/>
            <person name="Hlavina W."/>
            <person name="Kapustin Y."/>
            <person name="Meric P."/>
            <person name="Maglott D."/>
            <person name="Birtle Z."/>
            <person name="Marques A.C."/>
            <person name="Graves T."/>
            <person name="Zhou S."/>
            <person name="Teague B."/>
            <person name="Potamousis K."/>
            <person name="Churas C."/>
            <person name="Place M."/>
            <person name="Herschleb J."/>
            <person name="Runnheim R."/>
            <person name="Forrest D."/>
            <person name="Amos-Landgraf J."/>
            <person name="Schwartz D.C."/>
            <person name="Cheng Z."/>
            <person name="Lindblad-Toh K."/>
            <person name="Eichler E.E."/>
            <person name="Ponting C.P."/>
        </authorList>
    </citation>
    <scope>NUCLEOTIDE SEQUENCE [LARGE SCALE GENOMIC DNA]</scope>
    <source>
        <strain>C57BL/6J</strain>
    </source>
</reference>
<reference key="3">
    <citation type="journal article" date="1987" name="Cell">
        <title>Complete cloning of the Duchenne muscular dystrophy (DMD) cDNA and preliminary genomic organization of the DMD gene in normal and affected individuals.</title>
        <authorList>
            <person name="Koenig M."/>
            <person name="Hoffman E.P."/>
            <person name="Bertelson C.J."/>
            <person name="Monaco A.P."/>
            <person name="Feener C."/>
            <person name="Kunkel L.M."/>
        </authorList>
    </citation>
    <scope>NUCLEOTIDE SEQUENCE [MRNA] OF 1-201</scope>
</reference>
<reference key="4">
    <citation type="journal article" date="1992" name="Mamm. Genome">
        <title>Sequence analysis of two exons from the murine dystrophin locus.</title>
        <authorList>
            <person name="Maconochie M.K."/>
            <person name="Brown S.D.M."/>
            <person name="Greenfield A.J."/>
        </authorList>
    </citation>
    <scope>NUCLEOTIDE SEQUENCE [GENOMIC DNA] OF 120-176</scope>
    <source>
        <strain>129/J</strain>
    </source>
</reference>
<reference key="5">
    <citation type="journal article" date="1987" name="Science">
        <title>Conservation of the Duchenne muscular dystrophy gene in mice and humans.</title>
        <authorList>
            <person name="Hoffman E.P."/>
            <person name="Monaco A.P."/>
            <person name="Feener C.C."/>
            <person name="Kunkel L.M."/>
        </authorList>
    </citation>
    <scope>NUCLEOTIDE SEQUENCE [MRNA] OF 300-1390</scope>
</reference>
<reference key="6">
    <citation type="journal article" date="1993" name="Mol. Cell Biol. Hum. Dis. Ser.">
        <title>PCR analysis of muscular dystrophy in mdx mice.</title>
        <authorList>
            <person name="Chamberlain J.S."/>
            <person name="Phelps S.F."/>
            <person name="Cox G.A."/>
            <person name="Maichele A.J."/>
            <person name="Greenwood A.D."/>
        </authorList>
    </citation>
    <scope>NUCLEOTIDE SEQUENCE [GENOMIC DNA] OF 986-1056</scope>
    <source>
        <strain>C57BL/10</strain>
        <tissue>Skeletal muscle</tissue>
    </source>
</reference>
<reference key="7">
    <citation type="submission" date="2009-01" db="UniProtKB">
        <authorList>
            <person name="Lubec G."/>
            <person name="Sunyer B."/>
            <person name="Chen W.-Q."/>
        </authorList>
    </citation>
    <scope>PROTEIN SEQUENCE OF 1129-1134</scope>
    <scope>IDENTIFICATION BY MASS SPECTROMETRY</scope>
    <source>
        <strain>OF1</strain>
        <tissue>Hippocampus</tissue>
    </source>
</reference>
<reference key="8">
    <citation type="journal article" date="1992" name="Differentiation">
        <title>Characterization and cell type distribution of a novel, major transcript of the Duchenne muscular dystrophy gene.</title>
        <authorList>
            <person name="Rapaport D."/>
            <person name="Lederfein D."/>
            <person name="den Dunnen J.T."/>
            <person name="Grootscholten P.M."/>
            <person name="van Ommen G.J.B."/>
            <person name="Fuchs O."/>
            <person name="Nudel U."/>
            <person name="Yaffe D."/>
        </authorList>
    </citation>
    <scope>NUCLEOTIDE SEQUENCE [MRNA] OF 3069-3181</scope>
</reference>
<reference key="9">
    <citation type="journal article" date="1995" name="Biochemistry">
        <title>Interactions between dystrophin glycoprotein complex proteins.</title>
        <authorList>
            <person name="Madhavan R."/>
            <person name="Jarrett H.W."/>
        </authorList>
    </citation>
    <scope>INTERACTION WITH SNTA1 IN THE DYSTROPHIN-ASSOCIATED GLYCOPROTEIN COMPLEX</scope>
</reference>
<reference key="10">
    <citation type="journal article" date="1995" name="Cell">
        <title>Nitric oxide synthase complexed with dystrophin and absent from skeletal muscle sarcolemma in Duchenne muscular dystrophy.</title>
        <authorList>
            <person name="Brenman J.E."/>
            <person name="Chao D.S."/>
            <person name="Xia H."/>
            <person name="Aldape K."/>
            <person name="Bredt D.S."/>
        </authorList>
    </citation>
    <scope>INTERACTION WITH NOS1</scope>
</reference>
<reference key="11">
    <citation type="journal article" date="1995" name="Hum. Mol. Genet.">
        <title>A novel dystrophin isoform is required for normal retinal electrophysiology.</title>
        <authorList>
            <person name="D'Souza V.N."/>
            <person name="Nguyen T.M."/>
            <person name="Morris G.E."/>
            <person name="Karges W."/>
            <person name="Pillers D.-A.M."/>
            <person name="Ray P.N."/>
        </authorList>
    </citation>
    <scope>ALTERNATIVE SPLICING</scope>
    <scope>FUNCTION</scope>
    <scope>TISSUE SPECIFICITY</scope>
    <source>
        <strain>C57BL/10</strain>
        <tissue>Retina</tissue>
    </source>
</reference>
<reference key="12">
    <citation type="journal article" date="1995" name="J. Biol. Chem.">
        <title>Association of aciculin with dystrophin and utrophin.</title>
        <authorList>
            <person name="Belkin A.M."/>
            <person name="Burridge K."/>
        </authorList>
    </citation>
    <scope>INTERACTION WITH PGM5</scope>
</reference>
<reference key="13">
    <citation type="journal article" date="1997" name="J. Cell Biol.">
        <title>Differential association of syntrophin pairs with the dystrophin complex.</title>
        <authorList>
            <person name="Peters M.F."/>
            <person name="Adams M.E."/>
            <person name="Froehner S.C."/>
        </authorList>
    </citation>
    <scope>INTERACTION WITH SNTB1 IN THE DYSTROPHIN-ASSOCIATED GLYCOPROTEIN COMPLEX</scope>
</reference>
<reference key="14">
    <citation type="journal article" date="2000" name="J. Cell Sci.">
        <title>Assembly of multiple dystrobrevin-containing complexes in the kidney.</title>
        <authorList>
            <person name="Loh N.Y."/>
            <person name="Newey S.E."/>
            <person name="Davies K.E."/>
            <person name="Blake D.J."/>
        </authorList>
    </citation>
    <scope>INTERACTION WITH DTNB</scope>
</reference>
<reference key="15">
    <citation type="journal article" date="2001" name="J. Neurochem.">
        <title>Dystroglycan contributes to the formation of multiple dystrophin-like complexes in brain.</title>
        <authorList>
            <person name="Moukhles H."/>
            <person name="Carbonetto S."/>
        </authorList>
    </citation>
    <scope>INTERACTION WITH DAG1 IN THE DYSTROPHIN-ASSOCIATED GLYCOPROTEIN COMPLEX</scope>
</reference>
<reference key="16">
    <citation type="journal article" date="2001" name="Neuron">
        <title>Specific disruption of a Schwann cell dystrophin-related protein complex in a demyelinating neuropathy.</title>
        <authorList>
            <person name="Sherman D.L."/>
            <person name="Fabrizi C."/>
            <person name="Gillespie C.S."/>
            <person name="Brophy P.J."/>
        </authorList>
    </citation>
    <scope>IDENTIFICATION IN A COMPLEX WITH DRP2; PRX; DAG1 AND UTRN</scope>
    <scope>TISSUE SPECIFICITY</scope>
</reference>
<reference key="17">
    <citation type="journal article" date="2006" name="Biochem. Biophys. Res. Commun.">
        <title>Interactions of intermediate filament protein synemin with dystrophin and utrophin.</title>
        <authorList>
            <person name="Bhosle R.C."/>
            <person name="Michele D.E."/>
            <person name="Campbell K.P."/>
            <person name="Li Z."/>
            <person name="Robson R.M."/>
        </authorList>
    </citation>
    <scope>INTERACTION WITH SYNM</scope>
</reference>
<reference key="18">
    <citation type="journal article" date="2007" name="Proc. Natl. Acad. Sci. U.S.A.">
        <title>Large-scale phosphorylation analysis of mouse liver.</title>
        <authorList>
            <person name="Villen J."/>
            <person name="Beausoleil S.A."/>
            <person name="Gerber S.A."/>
            <person name="Gygi S.P."/>
        </authorList>
    </citation>
    <scope>PHOSPHORYLATION [LARGE SCALE ANALYSIS] AT SER-3616 AND SER-3617</scope>
    <scope>IDENTIFICATION BY MASS SPECTROMETRY [LARGE SCALE ANALYSIS]</scope>
    <source>
        <tissue>Liver</tissue>
    </source>
</reference>
<reference key="19">
    <citation type="journal article" date="2008" name="Cell">
        <title>An ankyrin-based mechanism for functional organization of dystrophin and dystroglycan.</title>
        <authorList>
            <person name="Ayalon G."/>
            <person name="Davis J.Q."/>
            <person name="Scotland P.B."/>
            <person name="Bennett V."/>
        </authorList>
    </citation>
    <scope>INTERACTION WITH ANK2 AND ANK3</scope>
    <scope>SUBCELLULAR LOCATION</scope>
</reference>
<reference key="20">
    <citation type="journal article" date="2010" name="Cell">
        <title>A tissue-specific atlas of mouse protein phosphorylation and expression.</title>
        <authorList>
            <person name="Huttlin E.L."/>
            <person name="Jedrychowski M.P."/>
            <person name="Elias J.E."/>
            <person name="Goswami T."/>
            <person name="Rad R."/>
            <person name="Beausoleil S.A."/>
            <person name="Villen J."/>
            <person name="Haas W."/>
            <person name="Sowa M.E."/>
            <person name="Gygi S.P."/>
        </authorList>
    </citation>
    <scope>PHOSPHORYLATION [LARGE SCALE ANALYSIS] AT SER-3610; SER-3616 AND SER-3617</scope>
    <scope>IDENTIFICATION BY MASS SPECTROMETRY [LARGE SCALE ANALYSIS]</scope>
    <source>
        <tissue>Brain</tissue>
        <tissue>Brown adipose tissue</tissue>
        <tissue>Heart</tissue>
        <tissue>Kidney</tissue>
        <tissue>Liver</tissue>
        <tissue>Lung</tissue>
        <tissue>Pancreas</tissue>
        <tissue>Spleen</tissue>
        <tissue>Testis</tissue>
    </source>
</reference>
<reference key="21">
    <citation type="journal article" date="2010" name="J. Biol. Chem.">
        <title>Interactions with M-band titin and calpain 3 link myospryn (CMYA5) to tibial and limb-girdle muscular dystrophies.</title>
        <authorList>
            <person name="Sarparanta J."/>
            <person name="Blandin G."/>
            <person name="Charton K."/>
            <person name="Vihola A."/>
            <person name="Marchand S."/>
            <person name="Milic A."/>
            <person name="Hackman P."/>
            <person name="Ehler E."/>
            <person name="Richard I."/>
            <person name="Udd B."/>
        </authorList>
    </citation>
    <scope>INTERACTION WITH CMYA5</scope>
</reference>
<reference key="22">
    <citation type="journal article" date="2017" name="Bio. Protoc.">
        <title>Muscle Histology Characterization Using H&amp;E Staining and Muscle Fiber Type Classification Using Immunofluorescence Staining.</title>
        <authorList>
            <person name="Wang C."/>
            <person name="Yue F."/>
            <person name="Kuang S."/>
        </authorList>
    </citation>
    <scope>SUBCELLULAR LOCATION</scope>
    <scope>TISSUE SPECIFICITY</scope>
</reference>
<reference key="23">
    <citation type="journal article" date="2017" name="Hum. Mol. Genet.">
        <title>Consequences of MEGF10 deficiency on myoblast function and Notch1 interactions.</title>
        <authorList>
            <person name="Saha M."/>
            <person name="Mitsuhashi S."/>
            <person name="Jones M.D."/>
            <person name="Manko K."/>
            <person name="Reddy H.M."/>
            <person name="Bruels C."/>
            <person name="Cho K.A."/>
            <person name="Pacak C.A."/>
            <person name="Draper I."/>
            <person name="Kang P.B."/>
        </authorList>
    </citation>
    <scope>DISRUPTION PHENOTYPE</scope>
</reference>
<keyword id="KW-0002">3D-structure</keyword>
<keyword id="KW-0009">Actin-binding</keyword>
<keyword id="KW-0025">Alternative splicing</keyword>
<keyword id="KW-0106">Calcium</keyword>
<keyword id="KW-1003">Cell membrane</keyword>
<keyword id="KW-0963">Cytoplasm</keyword>
<keyword id="KW-0206">Cytoskeleton</keyword>
<keyword id="KW-0903">Direct protein sequencing</keyword>
<keyword id="KW-0472">Membrane</keyword>
<keyword id="KW-0479">Metal-binding</keyword>
<keyword id="KW-0597">Phosphoprotein</keyword>
<keyword id="KW-0628">Postsynaptic cell membrane</keyword>
<keyword id="KW-1185">Reference proteome</keyword>
<keyword id="KW-0677">Repeat</keyword>
<keyword id="KW-0770">Synapse</keyword>
<keyword id="KW-0862">Zinc</keyword>
<keyword id="KW-0863">Zinc-finger</keyword>
<protein>
    <recommendedName>
        <fullName>Dystrophin</fullName>
    </recommendedName>
</protein>
<accession>P11531</accession>
<accession>A2A9Z0</accession>
<accession>O35653</accession>
<accession>Q60703</accession>
<organism>
    <name type="scientific">Mus musculus</name>
    <name type="common">Mouse</name>
    <dbReference type="NCBI Taxonomy" id="10090"/>
    <lineage>
        <taxon>Eukaryota</taxon>
        <taxon>Metazoa</taxon>
        <taxon>Chordata</taxon>
        <taxon>Craniata</taxon>
        <taxon>Vertebrata</taxon>
        <taxon>Euteleostomi</taxon>
        <taxon>Mammalia</taxon>
        <taxon>Eutheria</taxon>
        <taxon>Euarchontoglires</taxon>
        <taxon>Glires</taxon>
        <taxon>Rodentia</taxon>
        <taxon>Myomorpha</taxon>
        <taxon>Muroidea</taxon>
        <taxon>Muridae</taxon>
        <taxon>Murinae</taxon>
        <taxon>Mus</taxon>
        <taxon>Mus</taxon>
    </lineage>
</organism>
<evidence type="ECO:0000250" key="1"/>
<evidence type="ECO:0000250" key="2">
    <source>
        <dbReference type="UniProtKB" id="P11532"/>
    </source>
</evidence>
<evidence type="ECO:0000255" key="3">
    <source>
        <dbReference type="PROSITE-ProRule" id="PRU00044"/>
    </source>
</evidence>
<evidence type="ECO:0000255" key="4">
    <source>
        <dbReference type="PROSITE-ProRule" id="PRU00224"/>
    </source>
</evidence>
<evidence type="ECO:0000255" key="5">
    <source>
        <dbReference type="PROSITE-ProRule" id="PRU00228"/>
    </source>
</evidence>
<evidence type="ECO:0000256" key="6">
    <source>
        <dbReference type="SAM" id="MobiDB-lite"/>
    </source>
</evidence>
<evidence type="ECO:0000269" key="7">
    <source>
    </source>
</evidence>
<evidence type="ECO:0000269" key="8">
    <source>
    </source>
</evidence>
<evidence type="ECO:0000269" key="9">
    <source>
    </source>
</evidence>
<evidence type="ECO:0000269" key="10">
    <source>
    </source>
</evidence>
<evidence type="ECO:0000269" key="11">
    <source>
    </source>
</evidence>
<evidence type="ECO:0000269" key="12">
    <source>
    </source>
</evidence>
<evidence type="ECO:0000269" key="13">
    <source>
    </source>
</evidence>
<evidence type="ECO:0000269" key="14">
    <source>
    </source>
</evidence>
<evidence type="ECO:0000269" key="15">
    <source>
    </source>
</evidence>
<evidence type="ECO:0000269" key="16">
    <source>
    </source>
</evidence>
<evidence type="ECO:0000269" key="17">
    <source>
    </source>
</evidence>
<evidence type="ECO:0000269" key="18">
    <source>
    </source>
</evidence>
<evidence type="ECO:0000269" key="19">
    <source>
    </source>
</evidence>
<evidence type="ECO:0000305" key="20"/>
<evidence type="ECO:0007744" key="21">
    <source>
    </source>
</evidence>
<evidence type="ECO:0007744" key="22">
    <source>
    </source>
</evidence>
<proteinExistence type="evidence at protein level"/>
<gene>
    <name type="primary">Dmd</name>
</gene>
<sequence>MLWWEEVEDCYEREDVQKKTFTKWINAQFSKFGKQHIDNLFSDLQDGKRLLDLLEGLTGQKLPKEKGSTRVHALNNVNKALRVLQKNNVDLVNIGSTDIVDGNHKLTLGLIWNIILHWQVKNVMKTIMAGLQQTNSEKILLSWVRQSTRNYPQVNVINFTSSWSDGLALNALIHSHRPDLFDWNSVVSQHSATQRLEHAFNIAKCQLGIEKLLDPEDVATTYPDKKSILMYITSLFQVLPQQVSIEAIQEVEMLPRTSSKVTREEHFQLHHQMHYSQQITVSLAQGYEQTSSSPKPRFKSYAFTQAAYVATSDSTQSPYPSQHLEAPRDKSLDSSLMETEVNLDSYQTALEEVLSWLLSAEDTLRAQGEISNDVEEVKEQFHAHEGFMMDLTSHQGLVGNVLQLGSQLVGKGKLSEDEEAEVQEQMNLLNSRWECLRVASMEKQSKLHKVLMDLQNQKLKELDDWLTKTEERTKKMEEEPFGPDLEDLKCQVQQHKVLQEDLEQEQVRVNSLTHMVVVVDESSGDHATAALEEQLKVLGDRWANICRWTEDRWIVLQDILLKWQHFTEEQCLFSTWLSEKEDAMKNIQTSGFKDQNEMMSSLHKISTLKIDLEKKKPTMEKLSSLNQDLLSALKNKSVTQKMEIWMENFAQRWDNLTQKLEKSSAQISQAVTTTQPSLTQTTVMETVTMVTTREQIMVKHAQEELPPPPPQKKRQITVDSELRKRLDVDITELHSWITRSEAVLQSSEFAVYRKEGNISDLQEKVNAIAREKAEKFRKLQDASRSAQALVEQMANEGVNAESIRQASEQLNSRWTEFCQLLSERVNWLEYQTNIITFYNQLQQLEQMTTTAENLLKTQSTTLSEPTAIKSQLKICKDEVNRLSALQPQIEQLKIQSLQLKEKGQGPMFLDADFVAFTNHFNHIFDGVRAKEKELQTIFDTLPPMRYQETMSSIRTWIQQSESKLSVPYLSVTEYEIMEERLGKLQALQSSLKEQQNGFNYLSDTVKEMAKKAPSEICQKYLSEFEEIEGHWKKLSSQLVESCQKLEEHMNKLRKFQNHIKTLQKWMAEVDVFLKEEWPALGDAEILKKQLKQCRLLVGDIQTIQPSLNSVNEGGQKIKSEAELEFASRLETELRELNTQWDHICRQVYTRKEALKAGLDKTVSLQKDLSEMHEWMTQAEEEYLERDFEYKTPDELQTAVEEMKRAKEEALQKETKVKLLTETVNSVIAHAPPSAQEALKKELETLTTNYQWLCTRLNGKCKTLEEVWACWHELLSYLEKANKWLNEVELKLKTMENVPAGPEEITEVLESLENLMHHSEENPNQIRLLAQTLTDGGVMDELINEELETFNSRWRELHEEAVRKQKLLEQSIQSAQEIEKSLHLIQESLEFIDKQLAAYITDKVDAAQMPQEAQKIQSDLTSHEISLEEMKKHNQGKDANQRVLSQIDVAQKKLQDVSMKFRLFQKPANFEQRLEESKMILDEVKMHLPALETKSVEQEVIQSQLSHCVNLYKSLSEVKSEVEMVIKTGRQIVQKKQTENPKELDERVTALKLHYNELGAKVTERKQQLEKCLKLSRKMRKEMNVLTEWLAATDTELTKRSAVEGMPSNLDSEVAWGKATQKEIEKQKAHLKSVTELGESLKMVLGKKETLVEDKLSLLNSNWIAVTSRVEEWLNLLLEYQKHMETFDQNIEQITKWIIHADELLDESEKKKPQQKEDILKRLKAEMNDMRPKVDSTRDQAAKLMANRGDHCRKVVEPQISELNRRFAAISHRIKTGKASIPLKELEQFNSDIQKLLEPLEAEIQQGVNLKEEDFNKDMSEDNEGTVNELLQRGDNLQQRITDERKREEIKIKQQLLQTKHNALKDLRSQRRKKALEISHQWYQYKRQADDLLKCLDEIEKKLASLPEPRDERKLKEIDRELQKKKEELNAVRRQAEGLSENGAAMAVEPTQIQLSKRWRQIESNFAQFRRLNFAQIHTLHEETMVVTTEDMPLDVSYVPSTYLTEISHILQALSEVDHLLNTPELCAKDFEDLFKQEESLKNIKDNLQQISGRIDIIHKKKTAALQSATSMEKVKVQEAVAQMDFQGEKLHRMYKERQGRFDRSVEKWRHFHYDMKVFNQWLNEVEQFFKKTQNPENWEHAKYKWYLKELQDGIGQRQAVVRTLNATGEEIIQQSSKTDVNILQEKLGSLSLRWHDICKELAERRKRIEEQKNVLSEFQRDLNEFVLWLEEADNIAITPLGDEQQLKEQLEQVKLLAEELPLRQGILKQLNETGGAVLVSAPIRPEEQDKLEKKLKQTNLQWIKVSRALPEKQGELEVHLKDFRQLEEQLDHLLLWLSPIRNQLEIYNQPSQAGPFDIKEIEVTVHGKQADVERLLSKGQHLYKEKPSTQPVKRKLEDLRSEWEAVNHLLRELRTKQPDRAPGLSTTGASASQTVTLVTQSVVTKETVISKLEMPSSLLLEVPALADFNRAWTELTDWLSLLDRVIKSQRVMVGDLEDINEMIIKQKATLQDLEQRRPQLEELITAAQNLKNKTSNQEARTIITDRIERIQIQWDEVQEQLQNRRQQLNEMLKDSTQWLEAKEEAEQVIGQVRGKLDSWKEGPHTVDAIQKKITETKQLAKDLRQRQISVDVANDLALKLLRDYSADDTRKVHMITENINTSWGNIHKRVSEQEAALEETHRLLQQFPLDLEKFLSWITEAETTANVLQDASRKEKLLEDSRGVRELMKPWQDLQGEIETHTDIYHNLDENGQKILRSLEGSDEAPLLQRRLDNMNFKWSELQKKSLNIRSHLEASSDQWKRLHLSLQELLVWLQLKDDELSRQAPIGGDFPAVQKQNDIHRAFKRELKTKEPVIMSTLETVRIFLTEQPLEGLEKLYQEPRELPPEERAQNVTRLLRKQAEEVNAEWDKLNLRSADWQRKIDEALERLQELQEAADELDLKLRQAEVIKGSWQPVGDLLIDSLQDHLEKVKALRGEIAPLKENVNRVNDLAHQLTTLGIQLSPYNLSTLEDLNTRWRLLQVAVEDRVRQLHEAHRDFGPASQHFLSTSVQGPWERAISPNKVPYYINHETQTTCWDHPKMTELYQSLADLNNVRFSAYRTAMKLRRLQKALCLDLLSLSAACDALDQHNLKQNDQPMDILQIINCLTTIYDRLEQEHNNLVNVPLCVDMCLNWLLNVYDTGRTGRIRVLSFKTGIISLCKAHLEDKYRYLFKQVASSTGFCDQRRLGLLLHDSIQIPRQLGEVASFGGSNIEPSVRSCFQFANNKPEIEAALFLDWMRLEPQSMVWLPVLHRVAAAETAKHQAKCNICKECPIIGFRYRSLKHFNYDICQSCFFSGRVAKGHKMHYPMVEYCTPTTSGEDVRDFAKVLKNKFRTKRYFAKHPRMGYLPVQTVLEGDNMETPVTLINFWPVDSAPASSPQLSHDDTHSRIEHYASRLAEMENSNGSYLNDSISPNESIDDEHLLIQHYCQSLNQDSPLSQPRSPAQILISLESEERGELERILADLEEENRNLQAEYDRLKQQHEHKGLSPLPSPPEMMPTSPQSPRDAELIAEAKLLRQHKGRLEARMQILEDHNKQLESQLHRLRQLLEQPQAEAKVNGTTVSSPSTSLQRSDSSQPMLLRVVGSQTSESMGEEDLLSPPQDTSTGLEEVMEQLNNSFPSSRGRNAPGKPMREDTM</sequence>
<name>DMD_MOUSE</name>